<comment type="similarity">
    <text evidence="1">Belongs to the carbamate kinase family.</text>
</comment>
<dbReference type="EMBL" id="U28375">
    <property type="protein sequence ID" value="AAA83055.1"/>
    <property type="molecule type" value="Genomic_DNA"/>
</dbReference>
<dbReference type="EMBL" id="U00096">
    <property type="protein sequence ID" value="AAC75912.1"/>
    <property type="molecule type" value="Genomic_DNA"/>
</dbReference>
<dbReference type="EMBL" id="AP009048">
    <property type="protein sequence ID" value="BAE76940.1"/>
    <property type="molecule type" value="Genomic_DNA"/>
</dbReference>
<dbReference type="PIR" id="B65071">
    <property type="entry name" value="B65071"/>
</dbReference>
<dbReference type="RefSeq" id="NP_417350.1">
    <property type="nucleotide sequence ID" value="NC_000913.3"/>
</dbReference>
<dbReference type="SMR" id="Q46807"/>
<dbReference type="BioGRID" id="4262324">
    <property type="interactions" value="9"/>
</dbReference>
<dbReference type="DIP" id="DIP-12850N"/>
<dbReference type="FunCoup" id="Q46807">
    <property type="interactions" value="228"/>
</dbReference>
<dbReference type="STRING" id="511145.b2874"/>
<dbReference type="PaxDb" id="511145-b2874"/>
<dbReference type="EnsemblBacteria" id="AAC75912">
    <property type="protein sequence ID" value="AAC75912"/>
    <property type="gene ID" value="b2874"/>
</dbReference>
<dbReference type="GeneID" id="947358"/>
<dbReference type="KEGG" id="ecj:JW2842"/>
<dbReference type="KEGG" id="eco:b2874"/>
<dbReference type="KEGG" id="ecoc:C3026_15765"/>
<dbReference type="PATRIC" id="fig|1411691.4.peg.3860"/>
<dbReference type="EchoBASE" id="EB2869"/>
<dbReference type="eggNOG" id="COG0549">
    <property type="taxonomic scope" value="Bacteria"/>
</dbReference>
<dbReference type="HOGENOM" id="CLU_076278_0_0_6"/>
<dbReference type="InParanoid" id="Q46807"/>
<dbReference type="OMA" id="DWCGAQT"/>
<dbReference type="OrthoDB" id="9766717at2"/>
<dbReference type="PhylomeDB" id="Q46807"/>
<dbReference type="BioCyc" id="EcoCyc:G7493-MONOMER"/>
<dbReference type="PRO" id="PR:Q46807"/>
<dbReference type="Proteomes" id="UP000000625">
    <property type="component" value="Chromosome"/>
</dbReference>
<dbReference type="GO" id="GO:0005829">
    <property type="term" value="C:cytosol"/>
    <property type="evidence" value="ECO:0000318"/>
    <property type="project" value="GO_Central"/>
</dbReference>
<dbReference type="GO" id="GO:0008804">
    <property type="term" value="F:carbamate kinase activity"/>
    <property type="evidence" value="ECO:0000318"/>
    <property type="project" value="GO_Central"/>
</dbReference>
<dbReference type="GO" id="GO:0019546">
    <property type="term" value="P:arginine deiminase pathway"/>
    <property type="evidence" value="ECO:0000318"/>
    <property type="project" value="GO_Central"/>
</dbReference>
<dbReference type="CDD" id="cd04235">
    <property type="entry name" value="AAK_CK"/>
    <property type="match status" value="1"/>
</dbReference>
<dbReference type="FunFam" id="3.40.1160.10:FF:000007">
    <property type="entry name" value="Carbamate kinase"/>
    <property type="match status" value="1"/>
</dbReference>
<dbReference type="Gene3D" id="3.40.1160.10">
    <property type="entry name" value="Acetylglutamate kinase-like"/>
    <property type="match status" value="1"/>
</dbReference>
<dbReference type="InterPro" id="IPR036393">
    <property type="entry name" value="AceGlu_kinase-like_sf"/>
</dbReference>
<dbReference type="InterPro" id="IPR001048">
    <property type="entry name" value="Asp/Glu/Uridylate_kinase"/>
</dbReference>
<dbReference type="InterPro" id="IPR003964">
    <property type="entry name" value="Carb_kinase"/>
</dbReference>
<dbReference type="NCBIfam" id="TIGR00746">
    <property type="entry name" value="arcC"/>
    <property type="match status" value="1"/>
</dbReference>
<dbReference type="NCBIfam" id="NF009007">
    <property type="entry name" value="PRK12352.1"/>
    <property type="match status" value="1"/>
</dbReference>
<dbReference type="PANTHER" id="PTHR30409">
    <property type="entry name" value="CARBAMATE KINASE"/>
    <property type="match status" value="1"/>
</dbReference>
<dbReference type="PANTHER" id="PTHR30409:SF1">
    <property type="entry name" value="CARBAMATE KINASE-RELATED"/>
    <property type="match status" value="1"/>
</dbReference>
<dbReference type="Pfam" id="PF00696">
    <property type="entry name" value="AA_kinase"/>
    <property type="match status" value="1"/>
</dbReference>
<dbReference type="PIRSF" id="PIRSF000723">
    <property type="entry name" value="Carbamate_kin"/>
    <property type="match status" value="1"/>
</dbReference>
<dbReference type="PRINTS" id="PR01469">
    <property type="entry name" value="CARBMTKINASE"/>
</dbReference>
<dbReference type="SUPFAM" id="SSF53633">
    <property type="entry name" value="Carbamate kinase-like"/>
    <property type="match status" value="1"/>
</dbReference>
<organism>
    <name type="scientific">Escherichia coli (strain K12)</name>
    <dbReference type="NCBI Taxonomy" id="83333"/>
    <lineage>
        <taxon>Bacteria</taxon>
        <taxon>Pseudomonadati</taxon>
        <taxon>Pseudomonadota</taxon>
        <taxon>Gammaproteobacteria</taxon>
        <taxon>Enterobacterales</taxon>
        <taxon>Enterobacteriaceae</taxon>
        <taxon>Escherichia</taxon>
    </lineage>
</organism>
<protein>
    <recommendedName>
        <fullName>Carbamate kinase-like protein YqeA</fullName>
    </recommendedName>
</protein>
<accession>Q46807</accession>
<accession>Q2M9W6</accession>
<evidence type="ECO:0000305" key="1"/>
<sequence>MSKKIVLALGGNALGDDLAGQMKAVKITSQAIVDLIAQGHEVIVTHGNGPQVGMINQAFEAAAKTEAHSPMLPMSVCVALSQGYIGYDLQNALREELLSRGINKPVATLVTQVEVDANDPAFLNPTKPIGSFFTEQEAEQLTKQGYTLKEDAGRGYRRVVASPKPVDIIEKETVKALVDAGQVVITVGGGGIPVIREGNHLRGASAVIDKDWASARLAEMIDADMLIILTAVEKVAINFGKENEQWLDRLSLSDAERFIEEGHFAKGSMLPKVEAAASFARSRAGREALITVLSKAKEGIEGKTGTVICQ</sequence>
<proteinExistence type="inferred from homology"/>
<gene>
    <name type="primary">yqeA</name>
    <name type="ordered locus">b2874</name>
    <name type="ordered locus">JW2842</name>
</gene>
<feature type="chain" id="PRO_0000185146" description="Carbamate kinase-like protein YqeA">
    <location>
        <begin position="1"/>
        <end position="310"/>
    </location>
</feature>
<keyword id="KW-0418">Kinase</keyword>
<keyword id="KW-1185">Reference proteome</keyword>
<keyword id="KW-0808">Transferase</keyword>
<name>ARCL_ECOLI</name>
<reference key="1">
    <citation type="journal article" date="1997" name="Science">
        <title>The complete genome sequence of Escherichia coli K-12.</title>
        <authorList>
            <person name="Blattner F.R."/>
            <person name="Plunkett G. III"/>
            <person name="Bloch C.A."/>
            <person name="Perna N.T."/>
            <person name="Burland V."/>
            <person name="Riley M."/>
            <person name="Collado-Vides J."/>
            <person name="Glasner J.D."/>
            <person name="Rode C.K."/>
            <person name="Mayhew G.F."/>
            <person name="Gregor J."/>
            <person name="Davis N.W."/>
            <person name="Kirkpatrick H.A."/>
            <person name="Goeden M.A."/>
            <person name="Rose D.J."/>
            <person name="Mau B."/>
            <person name="Shao Y."/>
        </authorList>
    </citation>
    <scope>NUCLEOTIDE SEQUENCE [LARGE SCALE GENOMIC DNA]</scope>
    <source>
        <strain>K12 / MG1655 / ATCC 47076</strain>
    </source>
</reference>
<reference key="2">
    <citation type="journal article" date="2006" name="Mol. Syst. Biol.">
        <title>Highly accurate genome sequences of Escherichia coli K-12 strains MG1655 and W3110.</title>
        <authorList>
            <person name="Hayashi K."/>
            <person name="Morooka N."/>
            <person name="Yamamoto Y."/>
            <person name="Fujita K."/>
            <person name="Isono K."/>
            <person name="Choi S."/>
            <person name="Ohtsubo E."/>
            <person name="Baba T."/>
            <person name="Wanner B.L."/>
            <person name="Mori H."/>
            <person name="Horiuchi T."/>
        </authorList>
    </citation>
    <scope>NUCLEOTIDE SEQUENCE [LARGE SCALE GENOMIC DNA]</scope>
    <source>
        <strain>K12 / W3110 / ATCC 27325 / DSM 5911</strain>
    </source>
</reference>